<dbReference type="EC" id="7.1.1.-"/>
<dbReference type="EMBL" id="AL939120">
    <property type="protein sequence ID" value="CAB44526.1"/>
    <property type="molecule type" value="Genomic_DNA"/>
</dbReference>
<dbReference type="PIR" id="T34619">
    <property type="entry name" value="T34619"/>
</dbReference>
<dbReference type="RefSeq" id="NP_628729.1">
    <property type="nucleotide sequence ID" value="NC_003888.3"/>
</dbReference>
<dbReference type="RefSeq" id="WP_003974379.1">
    <property type="nucleotide sequence ID" value="NZ_VNID01000017.1"/>
</dbReference>
<dbReference type="SMR" id="Q9XAQ9"/>
<dbReference type="FunCoup" id="Q9XAQ9">
    <property type="interactions" value="447"/>
</dbReference>
<dbReference type="STRING" id="100226.gene:17762212"/>
<dbReference type="PaxDb" id="100226-SCO4567"/>
<dbReference type="GeneID" id="96656070"/>
<dbReference type="KEGG" id="sco:SCO4567"/>
<dbReference type="PATRIC" id="fig|100226.15.peg.4639"/>
<dbReference type="eggNOG" id="COG1894">
    <property type="taxonomic scope" value="Bacteria"/>
</dbReference>
<dbReference type="HOGENOM" id="CLU_014881_0_1_11"/>
<dbReference type="InParanoid" id="Q9XAQ9"/>
<dbReference type="OrthoDB" id="9805533at2"/>
<dbReference type="PhylomeDB" id="Q9XAQ9"/>
<dbReference type="Proteomes" id="UP000001973">
    <property type="component" value="Chromosome"/>
</dbReference>
<dbReference type="GO" id="GO:0045271">
    <property type="term" value="C:respiratory chain complex I"/>
    <property type="evidence" value="ECO:0000318"/>
    <property type="project" value="GO_Central"/>
</dbReference>
<dbReference type="GO" id="GO:0051539">
    <property type="term" value="F:4 iron, 4 sulfur cluster binding"/>
    <property type="evidence" value="ECO:0007669"/>
    <property type="project" value="UniProtKB-KW"/>
</dbReference>
<dbReference type="GO" id="GO:0010181">
    <property type="term" value="F:FMN binding"/>
    <property type="evidence" value="ECO:0007669"/>
    <property type="project" value="InterPro"/>
</dbReference>
<dbReference type="GO" id="GO:0046872">
    <property type="term" value="F:metal ion binding"/>
    <property type="evidence" value="ECO:0007669"/>
    <property type="project" value="UniProtKB-KW"/>
</dbReference>
<dbReference type="GO" id="GO:0051287">
    <property type="term" value="F:NAD binding"/>
    <property type="evidence" value="ECO:0007669"/>
    <property type="project" value="InterPro"/>
</dbReference>
<dbReference type="GO" id="GO:0008137">
    <property type="term" value="F:NADH dehydrogenase (ubiquinone) activity"/>
    <property type="evidence" value="ECO:0007669"/>
    <property type="project" value="InterPro"/>
</dbReference>
<dbReference type="GO" id="GO:0048038">
    <property type="term" value="F:quinone binding"/>
    <property type="evidence" value="ECO:0007669"/>
    <property type="project" value="UniProtKB-KW"/>
</dbReference>
<dbReference type="GO" id="GO:0045333">
    <property type="term" value="P:cellular respiration"/>
    <property type="evidence" value="ECO:0000318"/>
    <property type="project" value="GO_Central"/>
</dbReference>
<dbReference type="FunFam" id="1.20.1440.230:FF:000001">
    <property type="entry name" value="Mitochondrial NADH dehydrogenase flavoprotein 1"/>
    <property type="match status" value="1"/>
</dbReference>
<dbReference type="FunFam" id="3.40.50.11540:FF:000001">
    <property type="entry name" value="NADH dehydrogenase [ubiquinone] flavoprotein 1, mitochondrial"/>
    <property type="match status" value="1"/>
</dbReference>
<dbReference type="FunFam" id="3.10.20.600:FF:000003">
    <property type="entry name" value="NADH-quinone oxidoreductase subunit F"/>
    <property type="match status" value="1"/>
</dbReference>
<dbReference type="Gene3D" id="3.10.20.600">
    <property type="match status" value="1"/>
</dbReference>
<dbReference type="Gene3D" id="6.10.250.1450">
    <property type="match status" value="1"/>
</dbReference>
<dbReference type="Gene3D" id="3.40.50.11540">
    <property type="entry name" value="NADH-ubiquinone oxidoreductase 51kDa subunit"/>
    <property type="match status" value="1"/>
</dbReference>
<dbReference type="Gene3D" id="1.20.1440.230">
    <property type="entry name" value="NADH-ubiquinone oxidoreductase 51kDa subunit, iron-sulphur binding domain"/>
    <property type="match status" value="1"/>
</dbReference>
<dbReference type="InterPro" id="IPR050837">
    <property type="entry name" value="ComplexI_51kDa_subunit"/>
</dbReference>
<dbReference type="InterPro" id="IPR001949">
    <property type="entry name" value="NADH-UbQ_OxRdtase_51kDa_CS"/>
</dbReference>
<dbReference type="InterPro" id="IPR011537">
    <property type="entry name" value="NADH-UbQ_OxRdtase_suF"/>
</dbReference>
<dbReference type="InterPro" id="IPR011538">
    <property type="entry name" value="Nuo51_FMN-bd"/>
</dbReference>
<dbReference type="InterPro" id="IPR037225">
    <property type="entry name" value="Nuo51_FMN-bd_sf"/>
</dbReference>
<dbReference type="InterPro" id="IPR019575">
    <property type="entry name" value="Nuop51_4Fe4S-bd"/>
</dbReference>
<dbReference type="InterPro" id="IPR037207">
    <property type="entry name" value="Nuop51_4Fe4S-bd_sf"/>
</dbReference>
<dbReference type="InterPro" id="IPR019554">
    <property type="entry name" value="Soluble_ligand-bd"/>
</dbReference>
<dbReference type="NCBIfam" id="TIGR01959">
    <property type="entry name" value="nuoF_fam"/>
    <property type="match status" value="1"/>
</dbReference>
<dbReference type="NCBIfam" id="NF010120">
    <property type="entry name" value="PRK13596.1"/>
    <property type="match status" value="1"/>
</dbReference>
<dbReference type="PANTHER" id="PTHR11780:SF10">
    <property type="entry name" value="NADH DEHYDROGENASE [UBIQUINONE] FLAVOPROTEIN 1, MITOCHONDRIAL"/>
    <property type="match status" value="1"/>
</dbReference>
<dbReference type="PANTHER" id="PTHR11780">
    <property type="entry name" value="NADH-UBIQUINONE OXIDOREDUCTASE FLAVOPROTEIN 1 NDUFV1"/>
    <property type="match status" value="1"/>
</dbReference>
<dbReference type="Pfam" id="PF01512">
    <property type="entry name" value="Complex1_51K"/>
    <property type="match status" value="1"/>
</dbReference>
<dbReference type="Pfam" id="PF10589">
    <property type="entry name" value="NADH_4Fe-4S"/>
    <property type="match status" value="1"/>
</dbReference>
<dbReference type="Pfam" id="PF10531">
    <property type="entry name" value="SLBB"/>
    <property type="match status" value="1"/>
</dbReference>
<dbReference type="SMART" id="SM00928">
    <property type="entry name" value="NADH_4Fe-4S"/>
    <property type="match status" value="1"/>
</dbReference>
<dbReference type="SUPFAM" id="SSF142019">
    <property type="entry name" value="Nqo1 FMN-binding domain-like"/>
    <property type="match status" value="1"/>
</dbReference>
<dbReference type="SUPFAM" id="SSF142984">
    <property type="entry name" value="Nqo1 middle domain-like"/>
    <property type="match status" value="1"/>
</dbReference>
<dbReference type="SUPFAM" id="SSF140490">
    <property type="entry name" value="Nqo1C-terminal domain-like"/>
    <property type="match status" value="1"/>
</dbReference>
<dbReference type="PROSITE" id="PS00644">
    <property type="entry name" value="COMPLEX1_51K_1"/>
    <property type="match status" value="1"/>
</dbReference>
<dbReference type="PROSITE" id="PS00645">
    <property type="entry name" value="COMPLEX1_51K_2"/>
    <property type="match status" value="1"/>
</dbReference>
<reference key="1">
    <citation type="journal article" date="2002" name="Nature">
        <title>Complete genome sequence of the model actinomycete Streptomyces coelicolor A3(2).</title>
        <authorList>
            <person name="Bentley S.D."/>
            <person name="Chater K.F."/>
            <person name="Cerdeno-Tarraga A.-M."/>
            <person name="Challis G.L."/>
            <person name="Thomson N.R."/>
            <person name="James K.D."/>
            <person name="Harris D.E."/>
            <person name="Quail M.A."/>
            <person name="Kieser H."/>
            <person name="Harper D."/>
            <person name="Bateman A."/>
            <person name="Brown S."/>
            <person name="Chandra G."/>
            <person name="Chen C.W."/>
            <person name="Collins M."/>
            <person name="Cronin A."/>
            <person name="Fraser A."/>
            <person name="Goble A."/>
            <person name="Hidalgo J."/>
            <person name="Hornsby T."/>
            <person name="Howarth S."/>
            <person name="Huang C.-H."/>
            <person name="Kieser T."/>
            <person name="Larke L."/>
            <person name="Murphy L.D."/>
            <person name="Oliver K."/>
            <person name="O'Neil S."/>
            <person name="Rabbinowitsch E."/>
            <person name="Rajandream M.A."/>
            <person name="Rutherford K.M."/>
            <person name="Rutter S."/>
            <person name="Seeger K."/>
            <person name="Saunders D."/>
            <person name="Sharp S."/>
            <person name="Squares R."/>
            <person name="Squares S."/>
            <person name="Taylor K."/>
            <person name="Warren T."/>
            <person name="Wietzorrek A."/>
            <person name="Woodward J.R."/>
            <person name="Barrell B.G."/>
            <person name="Parkhill J."/>
            <person name="Hopwood D.A."/>
        </authorList>
    </citation>
    <scope>NUCLEOTIDE SEQUENCE [LARGE SCALE GENOMIC DNA]</scope>
    <source>
        <strain>ATCC BAA-471 / A3(2) / M145</strain>
    </source>
</reference>
<feature type="chain" id="PRO_0000118581" description="NADH-quinone oxidoreductase subunit F">
    <location>
        <begin position="1"/>
        <end position="449"/>
    </location>
</feature>
<feature type="binding site" evidence="1">
    <location>
        <begin position="67"/>
        <end position="76"/>
    </location>
    <ligand>
        <name>NAD(+)</name>
        <dbReference type="ChEBI" id="CHEBI:57540"/>
    </ligand>
</feature>
<feature type="binding site" evidence="1">
    <location>
        <begin position="179"/>
        <end position="226"/>
    </location>
    <ligand>
        <name>FMN</name>
        <dbReference type="ChEBI" id="CHEBI:58210"/>
    </ligand>
</feature>
<feature type="binding site" evidence="2">
    <location>
        <position position="355"/>
    </location>
    <ligand>
        <name>[4Fe-4S] cluster</name>
        <dbReference type="ChEBI" id="CHEBI:49883"/>
    </ligand>
</feature>
<feature type="binding site" evidence="2">
    <location>
        <position position="358"/>
    </location>
    <ligand>
        <name>[4Fe-4S] cluster</name>
        <dbReference type="ChEBI" id="CHEBI:49883"/>
    </ligand>
</feature>
<feature type="binding site" evidence="2">
    <location>
        <position position="361"/>
    </location>
    <ligand>
        <name>[4Fe-4S] cluster</name>
        <dbReference type="ChEBI" id="CHEBI:49883"/>
    </ligand>
</feature>
<feature type="binding site" evidence="2">
    <location>
        <position position="401"/>
    </location>
    <ligand>
        <name>[4Fe-4S] cluster</name>
        <dbReference type="ChEBI" id="CHEBI:49883"/>
    </ligand>
</feature>
<comment type="function">
    <text evidence="1">NDH-1 shuttles electrons from NADH, via FMN and iron-sulfur (Fe-S) centers, to quinones in the respiratory chain. Couples the redox reaction to proton translocation (for every two electrons transferred, four hydrogen ions are translocated across the cytoplasmic membrane), and thus conserves the redox energy in a proton gradient (By similarity).</text>
</comment>
<comment type="catalytic activity">
    <reaction>
        <text>a quinone + NADH + 5 H(+)(in) = a quinol + NAD(+) + 4 H(+)(out)</text>
        <dbReference type="Rhea" id="RHEA:57888"/>
        <dbReference type="ChEBI" id="CHEBI:15378"/>
        <dbReference type="ChEBI" id="CHEBI:24646"/>
        <dbReference type="ChEBI" id="CHEBI:57540"/>
        <dbReference type="ChEBI" id="CHEBI:57945"/>
        <dbReference type="ChEBI" id="CHEBI:132124"/>
    </reaction>
</comment>
<comment type="cofactor">
    <cofactor evidence="3">
        <name>FMN</name>
        <dbReference type="ChEBI" id="CHEBI:58210"/>
    </cofactor>
    <text evidence="3">Binds 1 FMN.</text>
</comment>
<comment type="cofactor">
    <cofactor evidence="3">
        <name>[4Fe-4S] cluster</name>
        <dbReference type="ChEBI" id="CHEBI:49883"/>
    </cofactor>
    <text evidence="3">Binds 1 [4Fe-4S] cluster.</text>
</comment>
<comment type="similarity">
    <text evidence="3">Belongs to the complex I 51 kDa subunit family.</text>
</comment>
<name>NUOF_STRCO</name>
<accession>Q9XAQ9</accession>
<organism>
    <name type="scientific">Streptomyces coelicolor (strain ATCC BAA-471 / A3(2) / M145)</name>
    <dbReference type="NCBI Taxonomy" id="100226"/>
    <lineage>
        <taxon>Bacteria</taxon>
        <taxon>Bacillati</taxon>
        <taxon>Actinomycetota</taxon>
        <taxon>Actinomycetes</taxon>
        <taxon>Kitasatosporales</taxon>
        <taxon>Streptomycetaceae</taxon>
        <taxon>Streptomyces</taxon>
        <taxon>Streptomyces albidoflavus group</taxon>
    </lineage>
</organism>
<proteinExistence type="inferred from homology"/>
<protein>
    <recommendedName>
        <fullName>NADH-quinone oxidoreductase subunit F</fullName>
        <ecNumber>7.1.1.-</ecNumber>
    </recommendedName>
    <alternativeName>
        <fullName>NADH dehydrogenase I subunit F</fullName>
    </alternativeName>
    <alternativeName>
        <fullName>NDH-1 subunit F</fullName>
    </alternativeName>
</protein>
<gene>
    <name type="primary">nuoF</name>
    <name type="ordered locus">SCO4567</name>
    <name type="ORF">SCD16A.16c</name>
</gene>
<sequence length="449" mass="48849">MMTVAAEIRGSNPEKLLAPVLSAFWDEDESWTLDVYRRHEGYEGLRKALAMAPDDLIAYVKESGLRGRGGAGFPTGMKWQFIPQGDGKPHYLVVNADESEPGTCKDIPLLFANPHSLIEGIVIACYAIRSSHAFIYLRGEVVPVLRRLHEAVREAYAAGFLGENILGSGLDLTLTVHAGAGAYICGEETALLDSLEGRRGQPRLRPPFPAVAGLYACPTVVNNVESIASVPAILNKGKDWFRSMGSEKSPGFTLYSLSGHVAGPGQYEAPLGITLRQLLDMSGGMRPGHRLKFWTPGGSSTPMFTDEHLDVPLDYEGVGAAGSMLGTKALQCFDETTCVVRAVTRWTEFYAHESCGKCTPCREGTYWLVQLLRDIEAGKGQMSDLDKLNDIADNINGKSFCALGDGAASPIFSSLKYFREEYEEHITGRGCPFDPAKSTAWADRTEVKA</sequence>
<keyword id="KW-0004">4Fe-4S</keyword>
<keyword id="KW-0285">Flavoprotein</keyword>
<keyword id="KW-0288">FMN</keyword>
<keyword id="KW-0408">Iron</keyword>
<keyword id="KW-0411">Iron-sulfur</keyword>
<keyword id="KW-0479">Metal-binding</keyword>
<keyword id="KW-0520">NAD</keyword>
<keyword id="KW-0874">Quinone</keyword>
<keyword id="KW-1185">Reference proteome</keyword>
<keyword id="KW-1278">Translocase</keyword>
<evidence type="ECO:0000250" key="1"/>
<evidence type="ECO:0000255" key="2"/>
<evidence type="ECO:0000305" key="3"/>